<comment type="function">
    <text evidence="1">Located at the top of the head of the 30S subunit, it contacts several helices of the 16S rRNA. In the 70S ribosome it contacts the 23S rRNA (bridge B1a) and protein L5 of the 50S subunit (bridge B1b), connecting the 2 subunits; these bridges are implicated in subunit movement. Contacts the tRNAs in the A and P-sites.</text>
</comment>
<comment type="subunit">
    <text evidence="1">Part of the 30S ribosomal subunit. Forms a loose heterodimer with protein S19. Forms two bridges to the 50S subunit in the 70S ribosome.</text>
</comment>
<comment type="similarity">
    <text evidence="1">Belongs to the universal ribosomal protein uS13 family.</text>
</comment>
<feature type="chain" id="PRO_1000165635" description="Small ribosomal subunit protein uS13">
    <location>
        <begin position="1"/>
        <end position="122"/>
    </location>
</feature>
<feature type="region of interest" description="Disordered" evidence="2">
    <location>
        <begin position="99"/>
        <end position="122"/>
    </location>
</feature>
<proteinExistence type="inferred from homology"/>
<accession>B9KLB3</accession>
<dbReference type="EMBL" id="CP001150">
    <property type="protein sequence ID" value="ACL99895.1"/>
    <property type="molecule type" value="Genomic_DNA"/>
</dbReference>
<dbReference type="RefSeq" id="WP_002722532.1">
    <property type="nucleotide sequence ID" value="NC_011963.1"/>
</dbReference>
<dbReference type="SMR" id="B9KLB3"/>
<dbReference type="GeneID" id="67445522"/>
<dbReference type="KEGG" id="rsk:RSKD131_0036"/>
<dbReference type="HOGENOM" id="CLU_103849_1_2_5"/>
<dbReference type="GO" id="GO:0005829">
    <property type="term" value="C:cytosol"/>
    <property type="evidence" value="ECO:0007669"/>
    <property type="project" value="TreeGrafter"/>
</dbReference>
<dbReference type="GO" id="GO:0015935">
    <property type="term" value="C:small ribosomal subunit"/>
    <property type="evidence" value="ECO:0007669"/>
    <property type="project" value="TreeGrafter"/>
</dbReference>
<dbReference type="GO" id="GO:0019843">
    <property type="term" value="F:rRNA binding"/>
    <property type="evidence" value="ECO:0007669"/>
    <property type="project" value="UniProtKB-UniRule"/>
</dbReference>
<dbReference type="GO" id="GO:0003735">
    <property type="term" value="F:structural constituent of ribosome"/>
    <property type="evidence" value="ECO:0007669"/>
    <property type="project" value="InterPro"/>
</dbReference>
<dbReference type="GO" id="GO:0000049">
    <property type="term" value="F:tRNA binding"/>
    <property type="evidence" value="ECO:0007669"/>
    <property type="project" value="UniProtKB-UniRule"/>
</dbReference>
<dbReference type="GO" id="GO:0006412">
    <property type="term" value="P:translation"/>
    <property type="evidence" value="ECO:0007669"/>
    <property type="project" value="UniProtKB-UniRule"/>
</dbReference>
<dbReference type="FunFam" id="1.10.8.50:FF:000001">
    <property type="entry name" value="30S ribosomal protein S13"/>
    <property type="match status" value="1"/>
</dbReference>
<dbReference type="FunFam" id="4.10.910.10:FF:000001">
    <property type="entry name" value="30S ribosomal protein S13"/>
    <property type="match status" value="1"/>
</dbReference>
<dbReference type="Gene3D" id="1.10.8.50">
    <property type="match status" value="1"/>
</dbReference>
<dbReference type="Gene3D" id="4.10.910.10">
    <property type="entry name" value="30s ribosomal protein s13, domain 2"/>
    <property type="match status" value="1"/>
</dbReference>
<dbReference type="HAMAP" id="MF_01315">
    <property type="entry name" value="Ribosomal_uS13"/>
    <property type="match status" value="1"/>
</dbReference>
<dbReference type="InterPro" id="IPR027437">
    <property type="entry name" value="Rbsml_uS13_C"/>
</dbReference>
<dbReference type="InterPro" id="IPR001892">
    <property type="entry name" value="Ribosomal_uS13"/>
</dbReference>
<dbReference type="InterPro" id="IPR010979">
    <property type="entry name" value="Ribosomal_uS13-like_H2TH"/>
</dbReference>
<dbReference type="InterPro" id="IPR019980">
    <property type="entry name" value="Ribosomal_uS13_bac-type"/>
</dbReference>
<dbReference type="InterPro" id="IPR018269">
    <property type="entry name" value="Ribosomal_uS13_CS"/>
</dbReference>
<dbReference type="NCBIfam" id="TIGR03631">
    <property type="entry name" value="uS13_bact"/>
    <property type="match status" value="1"/>
</dbReference>
<dbReference type="PANTHER" id="PTHR10871">
    <property type="entry name" value="30S RIBOSOMAL PROTEIN S13/40S RIBOSOMAL PROTEIN S18"/>
    <property type="match status" value="1"/>
</dbReference>
<dbReference type="PANTHER" id="PTHR10871:SF1">
    <property type="entry name" value="SMALL RIBOSOMAL SUBUNIT PROTEIN US13M"/>
    <property type="match status" value="1"/>
</dbReference>
<dbReference type="Pfam" id="PF00416">
    <property type="entry name" value="Ribosomal_S13"/>
    <property type="match status" value="1"/>
</dbReference>
<dbReference type="PIRSF" id="PIRSF002134">
    <property type="entry name" value="Ribosomal_S13"/>
    <property type="match status" value="1"/>
</dbReference>
<dbReference type="SUPFAM" id="SSF46946">
    <property type="entry name" value="S13-like H2TH domain"/>
    <property type="match status" value="1"/>
</dbReference>
<dbReference type="PROSITE" id="PS00646">
    <property type="entry name" value="RIBOSOMAL_S13_1"/>
    <property type="match status" value="1"/>
</dbReference>
<dbReference type="PROSITE" id="PS50159">
    <property type="entry name" value="RIBOSOMAL_S13_2"/>
    <property type="match status" value="1"/>
</dbReference>
<protein>
    <recommendedName>
        <fullName evidence="1">Small ribosomal subunit protein uS13</fullName>
    </recommendedName>
    <alternativeName>
        <fullName evidence="3">30S ribosomal protein S13</fullName>
    </alternativeName>
</protein>
<keyword id="KW-0687">Ribonucleoprotein</keyword>
<keyword id="KW-0689">Ribosomal protein</keyword>
<keyword id="KW-0694">RNA-binding</keyword>
<keyword id="KW-0699">rRNA-binding</keyword>
<keyword id="KW-0820">tRNA-binding</keyword>
<sequence length="122" mass="13505">MARIAGVNIPTAKRVPIALTYIHGIGDFVAGQICDAVGIDRARRVNELSDAEVLSIREYIDANVTVEGDLRRETSMNIKRLMDLGCYRGLRHRRGLPVRGQRTHTNARTRKGPAKAIAGKKK</sequence>
<organism>
    <name type="scientific">Cereibacter sphaeroides (strain KD131 / KCTC 12085)</name>
    <name type="common">Rhodobacter sphaeroides</name>
    <dbReference type="NCBI Taxonomy" id="557760"/>
    <lineage>
        <taxon>Bacteria</taxon>
        <taxon>Pseudomonadati</taxon>
        <taxon>Pseudomonadota</taxon>
        <taxon>Alphaproteobacteria</taxon>
        <taxon>Rhodobacterales</taxon>
        <taxon>Paracoccaceae</taxon>
        <taxon>Cereibacter</taxon>
    </lineage>
</organism>
<reference key="1">
    <citation type="journal article" date="2009" name="J. Bacteriol.">
        <title>Complete genome sequence of Rhodobacter sphaeroides KD131.</title>
        <authorList>
            <person name="Lim S.-K."/>
            <person name="Kim S.J."/>
            <person name="Cha S.H."/>
            <person name="Oh Y.-K."/>
            <person name="Rhee H.-J."/>
            <person name="Kim M.-S."/>
            <person name="Lee J.K."/>
        </authorList>
    </citation>
    <scope>NUCLEOTIDE SEQUENCE [LARGE SCALE GENOMIC DNA]</scope>
    <source>
        <strain>KD131 / KCTC 12085</strain>
    </source>
</reference>
<gene>
    <name evidence="1" type="primary">rpsM</name>
    <name type="ordered locus">RSKD131_0036</name>
</gene>
<evidence type="ECO:0000255" key="1">
    <source>
        <dbReference type="HAMAP-Rule" id="MF_01315"/>
    </source>
</evidence>
<evidence type="ECO:0000256" key="2">
    <source>
        <dbReference type="SAM" id="MobiDB-lite"/>
    </source>
</evidence>
<evidence type="ECO:0000305" key="3"/>
<name>RS13_CERSK</name>